<proteinExistence type="evidence at transcript level"/>
<accession>Q32LB1</accession>
<comment type="function">
    <text evidence="1">Part of a specialized transcription system that mediates the transcription of most ribosomal proteins through the 5'-TCT-3' motif which is a core promoter element at these genes. Seems to also mediate the transcription of NF1. Does not bind the TATA box (By similarity).</text>
</comment>
<comment type="subunit">
    <text evidence="1">Binds TFIIA and TFIIB.</text>
</comment>
<comment type="subcellular location">
    <subcellularLocation>
        <location evidence="1">Cytoplasm</location>
    </subcellularLocation>
    <subcellularLocation>
        <location evidence="1">Nucleus</location>
    </subcellularLocation>
</comment>
<comment type="similarity">
    <text evidence="2">Belongs to the TBP family.</text>
</comment>
<sequence length="186" mass="20887">MDADSDVALDILITNVVCVFRTRCHLNLRKIALEGANVIYKRDVGKVLMKLRKPRITATIWSSGKIICTGATSEEEAKFGARRLARSLQKLGFQVIFTDFKVVNVLAVCNMPFEIRLPEFTKNNRPHASYEPELHPAVCYRIKSLRATLQIFSTGSITVTGPNVKAVATAVEQIYPFVFESRKEIL</sequence>
<reference key="1">
    <citation type="submission" date="2005-11" db="EMBL/GenBank/DDBJ databases">
        <authorList>
            <consortium name="NIH - Mammalian Gene Collection (MGC) project"/>
        </authorList>
    </citation>
    <scope>NUCLEOTIDE SEQUENCE [LARGE SCALE MRNA]</scope>
    <source>
        <strain>Crossbred X Angus</strain>
        <tissue>Liver</tissue>
    </source>
</reference>
<organism>
    <name type="scientific">Bos taurus</name>
    <name type="common">Bovine</name>
    <dbReference type="NCBI Taxonomy" id="9913"/>
    <lineage>
        <taxon>Eukaryota</taxon>
        <taxon>Metazoa</taxon>
        <taxon>Chordata</taxon>
        <taxon>Craniata</taxon>
        <taxon>Vertebrata</taxon>
        <taxon>Euteleostomi</taxon>
        <taxon>Mammalia</taxon>
        <taxon>Eutheria</taxon>
        <taxon>Laurasiatheria</taxon>
        <taxon>Artiodactyla</taxon>
        <taxon>Ruminantia</taxon>
        <taxon>Pecora</taxon>
        <taxon>Bovidae</taxon>
        <taxon>Bovinae</taxon>
        <taxon>Bos</taxon>
    </lineage>
</organism>
<gene>
    <name type="primary">TBPL1</name>
    <name type="synonym">TLF</name>
    <name type="synonym">TLP</name>
    <name type="synonym">TRF2</name>
    <name type="synonym">TRP</name>
</gene>
<protein>
    <recommendedName>
        <fullName>TATA box-binding protein-like 1</fullName>
        <shortName>TBP-like 1</shortName>
    </recommendedName>
    <alternativeName>
        <fullName>TATA box-binding protein-related factor 2</fullName>
        <shortName>TBP-related factor 2</shortName>
    </alternativeName>
    <alternativeName>
        <fullName>TBP-like factor</fullName>
    </alternativeName>
    <alternativeName>
        <fullName>TBP-related protein</fullName>
    </alternativeName>
</protein>
<evidence type="ECO:0000250" key="1"/>
<evidence type="ECO:0000305" key="2"/>
<feature type="chain" id="PRO_0000293548" description="TATA box-binding protein-like 1">
    <location>
        <begin position="1"/>
        <end position="186"/>
    </location>
</feature>
<dbReference type="EMBL" id="BC109666">
    <property type="protein sequence ID" value="AAI09667.1"/>
    <property type="molecule type" value="mRNA"/>
</dbReference>
<dbReference type="RefSeq" id="NP_001069758.1">
    <property type="nucleotide sequence ID" value="NM_001076290.2"/>
</dbReference>
<dbReference type="RefSeq" id="XP_024852593.1">
    <property type="nucleotide sequence ID" value="XM_024996825.2"/>
</dbReference>
<dbReference type="SMR" id="Q32LB1"/>
<dbReference type="FunCoup" id="Q32LB1">
    <property type="interactions" value="2185"/>
</dbReference>
<dbReference type="STRING" id="9913.ENSBTAP00000046701"/>
<dbReference type="PaxDb" id="9913-ENSBTAP00000046701"/>
<dbReference type="Ensembl" id="ENSBTAT00000049877.4">
    <property type="protein sequence ID" value="ENSBTAP00000046701.2"/>
    <property type="gene ID" value="ENSBTAG00000035370.4"/>
</dbReference>
<dbReference type="GeneID" id="613818"/>
<dbReference type="KEGG" id="bta:613818"/>
<dbReference type="CTD" id="9519"/>
<dbReference type="VEuPathDB" id="HostDB:ENSBTAG00000035370"/>
<dbReference type="VGNC" id="VGNC:35660">
    <property type="gene designation" value="TBPL1"/>
</dbReference>
<dbReference type="eggNOG" id="KOG3302">
    <property type="taxonomic scope" value="Eukaryota"/>
</dbReference>
<dbReference type="GeneTree" id="ENSGT00940000155712"/>
<dbReference type="HOGENOM" id="CLU_060161_4_1_1"/>
<dbReference type="InParanoid" id="Q32LB1"/>
<dbReference type="OMA" id="NCEYEPE"/>
<dbReference type="OrthoDB" id="2127950at2759"/>
<dbReference type="TreeFam" id="TF300102"/>
<dbReference type="Proteomes" id="UP000009136">
    <property type="component" value="Chromosome 9"/>
</dbReference>
<dbReference type="Bgee" id="ENSBTAG00000035370">
    <property type="expression patterns" value="Expressed in oocyte and 105 other cell types or tissues"/>
</dbReference>
<dbReference type="GO" id="GO:0005737">
    <property type="term" value="C:cytoplasm"/>
    <property type="evidence" value="ECO:0007669"/>
    <property type="project" value="UniProtKB-SubCell"/>
</dbReference>
<dbReference type="GO" id="GO:0001673">
    <property type="term" value="C:male germ cell nucleus"/>
    <property type="evidence" value="ECO:0007669"/>
    <property type="project" value="Ensembl"/>
</dbReference>
<dbReference type="GO" id="GO:0005672">
    <property type="term" value="C:transcription factor TFIIA complex"/>
    <property type="evidence" value="ECO:0007669"/>
    <property type="project" value="Ensembl"/>
</dbReference>
<dbReference type="GO" id="GO:0140223">
    <property type="term" value="F:general transcription initiation factor activity"/>
    <property type="evidence" value="ECO:0000318"/>
    <property type="project" value="GO_Central"/>
</dbReference>
<dbReference type="GO" id="GO:0000979">
    <property type="term" value="F:RNA polymerase II core promoter sequence-specific DNA binding"/>
    <property type="evidence" value="ECO:0007669"/>
    <property type="project" value="Ensembl"/>
</dbReference>
<dbReference type="GO" id="GO:0016251">
    <property type="term" value="F:RNA polymerase II general transcription initiation factor activity"/>
    <property type="evidence" value="ECO:0007669"/>
    <property type="project" value="Ensembl"/>
</dbReference>
<dbReference type="GO" id="GO:0001675">
    <property type="term" value="P:acrosome assembly"/>
    <property type="evidence" value="ECO:0007669"/>
    <property type="project" value="Ensembl"/>
</dbReference>
<dbReference type="GO" id="GO:0006352">
    <property type="term" value="P:DNA-templated transcription initiation"/>
    <property type="evidence" value="ECO:0000318"/>
    <property type="project" value="GO_Central"/>
</dbReference>
<dbReference type="GO" id="GO:0006235">
    <property type="term" value="P:dTTP biosynthetic process"/>
    <property type="evidence" value="ECO:0007669"/>
    <property type="project" value="Ensembl"/>
</dbReference>
<dbReference type="GO" id="GO:0007289">
    <property type="term" value="P:spermatid nucleus differentiation"/>
    <property type="evidence" value="ECO:0007669"/>
    <property type="project" value="Ensembl"/>
</dbReference>
<dbReference type="CDD" id="cd04517">
    <property type="entry name" value="TLF"/>
    <property type="match status" value="1"/>
</dbReference>
<dbReference type="FunFam" id="3.30.310.10:FF:000005">
    <property type="entry name" value="TATA box-binding protein-like 1"/>
    <property type="match status" value="1"/>
</dbReference>
<dbReference type="FunFam" id="3.30.310.10:FF:000009">
    <property type="entry name" value="TatA box-binding protein-like protein 1"/>
    <property type="match status" value="1"/>
</dbReference>
<dbReference type="Gene3D" id="3.30.310.10">
    <property type="entry name" value="TATA-Binding Protein"/>
    <property type="match status" value="2"/>
</dbReference>
<dbReference type="InterPro" id="IPR000814">
    <property type="entry name" value="TBP"/>
</dbReference>
<dbReference type="InterPro" id="IPR015445">
    <property type="entry name" value="TBP-like"/>
</dbReference>
<dbReference type="InterPro" id="IPR012295">
    <property type="entry name" value="TBP_dom_sf"/>
</dbReference>
<dbReference type="PANTHER" id="PTHR10126">
    <property type="entry name" value="TATA-BOX BINDING PROTEIN"/>
    <property type="match status" value="1"/>
</dbReference>
<dbReference type="Pfam" id="PF00352">
    <property type="entry name" value="TBP"/>
    <property type="match status" value="2"/>
</dbReference>
<dbReference type="PRINTS" id="PR00686">
    <property type="entry name" value="TIFACTORIID"/>
</dbReference>
<dbReference type="SUPFAM" id="SSF55945">
    <property type="entry name" value="TATA-box binding protein-like"/>
    <property type="match status" value="2"/>
</dbReference>
<name>TBPL1_BOVIN</name>
<keyword id="KW-0963">Cytoplasm</keyword>
<keyword id="KW-0238">DNA-binding</keyword>
<keyword id="KW-0539">Nucleus</keyword>
<keyword id="KW-1185">Reference proteome</keyword>
<keyword id="KW-0804">Transcription</keyword>
<keyword id="KW-0805">Transcription regulation</keyword>